<gene>
    <name type="primary">OR10H3</name>
</gene>
<accession>O60404</accession>
<accession>Q2HIZ3</accession>
<accession>Q6IFQ0</accession>
<protein>
    <recommendedName>
        <fullName>Olfactory receptor 10H3</fullName>
    </recommendedName>
    <alternativeName>
        <fullName>Olfactory receptor OR19-24</fullName>
    </alternativeName>
</protein>
<comment type="function">
    <text evidence="4">Odorant receptor.</text>
</comment>
<comment type="subcellular location">
    <subcellularLocation>
        <location>Cell membrane</location>
        <topology>Multi-pass membrane protein</topology>
    </subcellularLocation>
</comment>
<comment type="similarity">
    <text evidence="2">Belongs to the G-protein coupled receptor 1 family.</text>
</comment>
<comment type="online information" name="Human Olfactory Receptor Data Exploratorium (HORDE)">
    <link uri="http://genome.weizmann.ac.il/horde/card/index/symbol:OR10H3"/>
</comment>
<sequence length="316" mass="35721">MPGQNYRTISEFILSGFSAFPQQLLPVLFLLYLLMFLFTLLGNLLIMATVWIERRLHTPMYLFLCALSISEILFTVAITPRMLADLLFTHRSITFVACAIQMFFSFMFGFTHSFLLMVMGYDHYVTICHPLHYNMLMSPRGCAHLVAWTWAGGSVMGMMVTMMVFHLTFCGSNVIHHFLCHVLSLLKLACGSKTSSVIMGVMLVCVTALIGCLFLIILSFVFIVAAILRIPSAEGRHKTFSTCVSHLTVVVMHYSFASLIYLKPKGLHSMYSDALMATTYTVFTPFLSPIIFSLRNKELKNAINKNFCRRFCPLSS</sequence>
<name>O10H3_HUMAN</name>
<reference key="1">
    <citation type="journal article" date="2004" name="Nature">
        <title>The DNA sequence and biology of human chromosome 19.</title>
        <authorList>
            <person name="Grimwood J."/>
            <person name="Gordon L.A."/>
            <person name="Olsen A.S."/>
            <person name="Terry A."/>
            <person name="Schmutz J."/>
            <person name="Lamerdin J.E."/>
            <person name="Hellsten U."/>
            <person name="Goodstein D."/>
            <person name="Couronne O."/>
            <person name="Tran-Gyamfi M."/>
            <person name="Aerts A."/>
            <person name="Altherr M."/>
            <person name="Ashworth L."/>
            <person name="Bajorek E."/>
            <person name="Black S."/>
            <person name="Branscomb E."/>
            <person name="Caenepeel S."/>
            <person name="Carrano A.V."/>
            <person name="Caoile C."/>
            <person name="Chan Y.M."/>
            <person name="Christensen M."/>
            <person name="Cleland C.A."/>
            <person name="Copeland A."/>
            <person name="Dalin E."/>
            <person name="Dehal P."/>
            <person name="Denys M."/>
            <person name="Detter J.C."/>
            <person name="Escobar J."/>
            <person name="Flowers D."/>
            <person name="Fotopulos D."/>
            <person name="Garcia C."/>
            <person name="Georgescu A.M."/>
            <person name="Glavina T."/>
            <person name="Gomez M."/>
            <person name="Gonzales E."/>
            <person name="Groza M."/>
            <person name="Hammon N."/>
            <person name="Hawkins T."/>
            <person name="Haydu L."/>
            <person name="Ho I."/>
            <person name="Huang W."/>
            <person name="Israni S."/>
            <person name="Jett J."/>
            <person name="Kadner K."/>
            <person name="Kimball H."/>
            <person name="Kobayashi A."/>
            <person name="Larionov V."/>
            <person name="Leem S.-H."/>
            <person name="Lopez F."/>
            <person name="Lou Y."/>
            <person name="Lowry S."/>
            <person name="Malfatti S."/>
            <person name="Martinez D."/>
            <person name="McCready P.M."/>
            <person name="Medina C."/>
            <person name="Morgan J."/>
            <person name="Nelson K."/>
            <person name="Nolan M."/>
            <person name="Ovcharenko I."/>
            <person name="Pitluck S."/>
            <person name="Pollard M."/>
            <person name="Popkie A.P."/>
            <person name="Predki P."/>
            <person name="Quan G."/>
            <person name="Ramirez L."/>
            <person name="Rash S."/>
            <person name="Retterer J."/>
            <person name="Rodriguez A."/>
            <person name="Rogers S."/>
            <person name="Salamov A."/>
            <person name="Salazar A."/>
            <person name="She X."/>
            <person name="Smith D."/>
            <person name="Slezak T."/>
            <person name="Solovyev V."/>
            <person name="Thayer N."/>
            <person name="Tice H."/>
            <person name="Tsai M."/>
            <person name="Ustaszewska A."/>
            <person name="Vo N."/>
            <person name="Wagner M."/>
            <person name="Wheeler J."/>
            <person name="Wu K."/>
            <person name="Xie G."/>
            <person name="Yang J."/>
            <person name="Dubchak I."/>
            <person name="Furey T.S."/>
            <person name="DeJong P."/>
            <person name="Dickson M."/>
            <person name="Gordon D."/>
            <person name="Eichler E.E."/>
            <person name="Pennacchio L.A."/>
            <person name="Richardson P."/>
            <person name="Stubbs L."/>
            <person name="Rokhsar D.S."/>
            <person name="Myers R.M."/>
            <person name="Rubin E.M."/>
            <person name="Lucas S.M."/>
        </authorList>
    </citation>
    <scope>NUCLEOTIDE SEQUENCE [LARGE SCALE GENOMIC DNA]</scope>
</reference>
<reference key="2">
    <citation type="journal article" date="2004" name="Genome Res.">
        <title>The status, quality, and expansion of the NIH full-length cDNA project: the Mammalian Gene Collection (MGC).</title>
        <authorList>
            <consortium name="The MGC Project Team"/>
        </authorList>
    </citation>
    <scope>NUCLEOTIDE SEQUENCE [LARGE SCALE MRNA]</scope>
    <scope>VARIANT MET-224</scope>
</reference>
<reference key="3">
    <citation type="journal article" date="2004" name="Proc. Natl. Acad. Sci. U.S.A.">
        <title>The human olfactory receptor gene family.</title>
        <authorList>
            <person name="Malnic B."/>
            <person name="Godfrey P.A."/>
            <person name="Buck L.B."/>
        </authorList>
    </citation>
    <scope>IDENTIFICATION</scope>
</reference>
<reference key="4">
    <citation type="journal article" date="2004" name="Proc. Natl. Acad. Sci. U.S.A.">
        <authorList>
            <person name="Malnic B."/>
            <person name="Godfrey P.A."/>
            <person name="Buck L.B."/>
        </authorList>
    </citation>
    <scope>ERRATUM OF PUBMED:14983052</scope>
</reference>
<organism>
    <name type="scientific">Homo sapiens</name>
    <name type="common">Human</name>
    <dbReference type="NCBI Taxonomy" id="9606"/>
    <lineage>
        <taxon>Eukaryota</taxon>
        <taxon>Metazoa</taxon>
        <taxon>Chordata</taxon>
        <taxon>Craniata</taxon>
        <taxon>Vertebrata</taxon>
        <taxon>Euteleostomi</taxon>
        <taxon>Mammalia</taxon>
        <taxon>Eutheria</taxon>
        <taxon>Euarchontoglires</taxon>
        <taxon>Primates</taxon>
        <taxon>Haplorrhini</taxon>
        <taxon>Catarrhini</taxon>
        <taxon>Hominidae</taxon>
        <taxon>Homo</taxon>
    </lineage>
</organism>
<keyword id="KW-1003">Cell membrane</keyword>
<keyword id="KW-1015">Disulfide bond</keyword>
<keyword id="KW-0297">G-protein coupled receptor</keyword>
<keyword id="KW-0472">Membrane</keyword>
<keyword id="KW-0552">Olfaction</keyword>
<keyword id="KW-0675">Receptor</keyword>
<keyword id="KW-1185">Reference proteome</keyword>
<keyword id="KW-0716">Sensory transduction</keyword>
<keyword id="KW-0807">Transducer</keyword>
<keyword id="KW-0812">Transmembrane</keyword>
<keyword id="KW-1133">Transmembrane helix</keyword>
<proteinExistence type="evidence at transcript level"/>
<evidence type="ECO:0000255" key="1"/>
<evidence type="ECO:0000255" key="2">
    <source>
        <dbReference type="PROSITE-ProRule" id="PRU00521"/>
    </source>
</evidence>
<evidence type="ECO:0000269" key="3">
    <source>
    </source>
</evidence>
<evidence type="ECO:0000305" key="4"/>
<dbReference type="EMBL" id="AC004597">
    <property type="protein sequence ID" value="AAC14389.1"/>
    <property type="molecule type" value="Genomic_DNA"/>
</dbReference>
<dbReference type="EMBL" id="BC106707">
    <property type="protein sequence ID" value="AAI06708.1"/>
    <property type="molecule type" value="mRNA"/>
</dbReference>
<dbReference type="EMBL" id="BC113844">
    <property type="protein sequence ID" value="AAI13845.1"/>
    <property type="molecule type" value="mRNA"/>
</dbReference>
<dbReference type="EMBL" id="BK004212">
    <property type="protein sequence ID" value="DAA04610.1"/>
    <property type="molecule type" value="Genomic_DNA"/>
</dbReference>
<dbReference type="CCDS" id="CCDS12334.1"/>
<dbReference type="RefSeq" id="NP_039226.1">
    <property type="nucleotide sequence ID" value="NM_013938.2"/>
</dbReference>
<dbReference type="SMR" id="O60404"/>
<dbReference type="BioGRID" id="117734">
    <property type="interactions" value="8"/>
</dbReference>
<dbReference type="FunCoup" id="O60404">
    <property type="interactions" value="456"/>
</dbReference>
<dbReference type="IntAct" id="O60404">
    <property type="interactions" value="7"/>
</dbReference>
<dbReference type="STRING" id="9606.ENSP00000493287"/>
<dbReference type="GlyGen" id="O60404">
    <property type="glycosylation" value="1 site"/>
</dbReference>
<dbReference type="iPTMnet" id="O60404"/>
<dbReference type="PhosphoSitePlus" id="O60404"/>
<dbReference type="BioMuta" id="OR10H3"/>
<dbReference type="PaxDb" id="9606-ENSP00000307130"/>
<dbReference type="PeptideAtlas" id="O60404"/>
<dbReference type="Antibodypedia" id="54307">
    <property type="antibodies" value="21 antibodies from 11 providers"/>
</dbReference>
<dbReference type="DNASU" id="26532"/>
<dbReference type="Ensembl" id="ENST00000641646.1">
    <property type="protein sequence ID" value="ENSP00000493287.1"/>
    <property type="gene ID" value="ENSG00000171936.3"/>
</dbReference>
<dbReference type="GeneID" id="26532"/>
<dbReference type="KEGG" id="hsa:26532"/>
<dbReference type="MANE-Select" id="ENST00000641646.1">
    <property type="protein sequence ID" value="ENSP00000493287.1"/>
    <property type="RefSeq nucleotide sequence ID" value="NM_013938.2"/>
    <property type="RefSeq protein sequence ID" value="NP_039226.1"/>
</dbReference>
<dbReference type="UCSC" id="uc010xoq.2">
    <property type="organism name" value="human"/>
</dbReference>
<dbReference type="AGR" id="HGNC:8174"/>
<dbReference type="CTD" id="26532"/>
<dbReference type="GeneCards" id="OR10H3"/>
<dbReference type="HGNC" id="HGNC:8174">
    <property type="gene designation" value="OR10H3"/>
</dbReference>
<dbReference type="HPA" id="ENSG00000171936">
    <property type="expression patterns" value="Not detected"/>
</dbReference>
<dbReference type="neXtProt" id="NX_O60404"/>
<dbReference type="PharmGKB" id="PA31979"/>
<dbReference type="VEuPathDB" id="HostDB:ENSG00000171936"/>
<dbReference type="eggNOG" id="ENOG502SJHK">
    <property type="taxonomic scope" value="Eukaryota"/>
</dbReference>
<dbReference type="GeneTree" id="ENSGT01090000260045"/>
<dbReference type="HOGENOM" id="CLU_012526_1_0_1"/>
<dbReference type="InParanoid" id="O60404"/>
<dbReference type="OMA" id="FVACAIQ"/>
<dbReference type="OrthoDB" id="9975554at2759"/>
<dbReference type="PAN-GO" id="O60404">
    <property type="GO annotations" value="6 GO annotations based on evolutionary models"/>
</dbReference>
<dbReference type="PhylomeDB" id="O60404"/>
<dbReference type="TreeFam" id="TF338279"/>
<dbReference type="PathwayCommons" id="O60404"/>
<dbReference type="Reactome" id="R-HSA-9752946">
    <property type="pathway name" value="Expression and translocation of olfactory receptors"/>
</dbReference>
<dbReference type="SignaLink" id="O60404"/>
<dbReference type="BioGRID-ORCS" id="26532">
    <property type="hits" value="8 hits in 707 CRISPR screens"/>
</dbReference>
<dbReference type="GeneWiki" id="OR10H3"/>
<dbReference type="GenomeRNAi" id="26532"/>
<dbReference type="Pharos" id="O60404">
    <property type="development level" value="Tdark"/>
</dbReference>
<dbReference type="PRO" id="PR:O60404"/>
<dbReference type="Proteomes" id="UP000005640">
    <property type="component" value="Chromosome 19"/>
</dbReference>
<dbReference type="RNAct" id="O60404">
    <property type="molecule type" value="protein"/>
</dbReference>
<dbReference type="Bgee" id="ENSG00000171936">
    <property type="expression patterns" value="Expressed in pancreatic ductal cell and 5 other cell types or tissues"/>
</dbReference>
<dbReference type="ExpressionAtlas" id="O60404">
    <property type="expression patterns" value="baseline and differential"/>
</dbReference>
<dbReference type="GO" id="GO:0005886">
    <property type="term" value="C:plasma membrane"/>
    <property type="evidence" value="ECO:0000318"/>
    <property type="project" value="GO_Central"/>
</dbReference>
<dbReference type="GO" id="GO:0004930">
    <property type="term" value="F:G protein-coupled receptor activity"/>
    <property type="evidence" value="ECO:0007669"/>
    <property type="project" value="UniProtKB-KW"/>
</dbReference>
<dbReference type="GO" id="GO:0004984">
    <property type="term" value="F:olfactory receptor activity"/>
    <property type="evidence" value="ECO:0000318"/>
    <property type="project" value="GO_Central"/>
</dbReference>
<dbReference type="GO" id="GO:0050911">
    <property type="term" value="P:detection of chemical stimulus involved in sensory perception of smell"/>
    <property type="evidence" value="ECO:0000318"/>
    <property type="project" value="GO_Central"/>
</dbReference>
<dbReference type="FunFam" id="1.20.1070.10:FF:000110">
    <property type="entry name" value="olfactory receptor 10H1-like"/>
    <property type="match status" value="1"/>
</dbReference>
<dbReference type="Gene3D" id="1.20.1070.10">
    <property type="entry name" value="Rhodopsin 7-helix transmembrane proteins"/>
    <property type="match status" value="1"/>
</dbReference>
<dbReference type="InterPro" id="IPR000276">
    <property type="entry name" value="GPCR_Rhodpsn"/>
</dbReference>
<dbReference type="InterPro" id="IPR017452">
    <property type="entry name" value="GPCR_Rhodpsn_7TM"/>
</dbReference>
<dbReference type="InterPro" id="IPR000725">
    <property type="entry name" value="Olfact_rcpt"/>
</dbReference>
<dbReference type="PANTHER" id="PTHR26453">
    <property type="entry name" value="OLFACTORY RECEPTOR"/>
    <property type="match status" value="1"/>
</dbReference>
<dbReference type="Pfam" id="PF13853">
    <property type="entry name" value="7tm_4"/>
    <property type="match status" value="1"/>
</dbReference>
<dbReference type="PRINTS" id="PR00237">
    <property type="entry name" value="GPCRRHODOPSN"/>
</dbReference>
<dbReference type="PRINTS" id="PR00245">
    <property type="entry name" value="OLFACTORYR"/>
</dbReference>
<dbReference type="SUPFAM" id="SSF81321">
    <property type="entry name" value="Family A G protein-coupled receptor-like"/>
    <property type="match status" value="1"/>
</dbReference>
<dbReference type="PROSITE" id="PS50262">
    <property type="entry name" value="G_PROTEIN_RECEP_F1_2"/>
    <property type="match status" value="1"/>
</dbReference>
<feature type="chain" id="PRO_0000150704" description="Olfactory receptor 10H3">
    <location>
        <begin position="1"/>
        <end position="316"/>
    </location>
</feature>
<feature type="topological domain" description="Extracellular" evidence="1">
    <location>
        <begin position="1"/>
        <end position="25"/>
    </location>
</feature>
<feature type="transmembrane region" description="Helical; Name=1" evidence="1">
    <location>
        <begin position="26"/>
        <end position="46"/>
    </location>
</feature>
<feature type="topological domain" description="Cytoplasmic" evidence="1">
    <location>
        <begin position="47"/>
        <end position="54"/>
    </location>
</feature>
<feature type="transmembrane region" description="Helical; Name=2" evidence="1">
    <location>
        <begin position="55"/>
        <end position="75"/>
    </location>
</feature>
<feature type="topological domain" description="Extracellular" evidence="1">
    <location>
        <begin position="76"/>
        <end position="99"/>
    </location>
</feature>
<feature type="transmembrane region" description="Helical; Name=3" evidence="1">
    <location>
        <begin position="100"/>
        <end position="120"/>
    </location>
</feature>
<feature type="topological domain" description="Cytoplasmic" evidence="1">
    <location>
        <begin position="121"/>
        <end position="139"/>
    </location>
</feature>
<feature type="transmembrane region" description="Helical; Name=4" evidence="1">
    <location>
        <begin position="140"/>
        <end position="160"/>
    </location>
</feature>
<feature type="topological domain" description="Extracellular" evidence="1">
    <location>
        <begin position="161"/>
        <end position="197"/>
    </location>
</feature>
<feature type="transmembrane region" description="Helical; Name=5" evidence="1">
    <location>
        <begin position="198"/>
        <end position="218"/>
    </location>
</feature>
<feature type="topological domain" description="Cytoplasmic" evidence="1">
    <location>
        <begin position="219"/>
        <end position="238"/>
    </location>
</feature>
<feature type="transmembrane region" description="Helical; Name=6" evidence="1">
    <location>
        <begin position="239"/>
        <end position="259"/>
    </location>
</feature>
<feature type="topological domain" description="Extracellular" evidence="1">
    <location>
        <begin position="260"/>
        <end position="272"/>
    </location>
</feature>
<feature type="transmembrane region" description="Helical; Name=7" evidence="1">
    <location>
        <begin position="273"/>
        <end position="293"/>
    </location>
</feature>
<feature type="topological domain" description="Cytoplasmic" evidence="1">
    <location>
        <begin position="294"/>
        <end position="316"/>
    </location>
</feature>
<feature type="disulfide bond" evidence="2">
    <location>
        <begin position="98"/>
        <end position="190"/>
    </location>
</feature>
<feature type="sequence variant" id="VAR_024128" description="In dbSNP:rs1966357.">
    <original>R</original>
    <variation>S</variation>
    <location>
        <position position="7"/>
    </location>
</feature>
<feature type="sequence variant" id="VAR_034288" description="In dbSNP:rs2240227.">
    <original>L</original>
    <variation>I</variation>
    <location>
        <position position="14"/>
    </location>
</feature>
<feature type="sequence variant" id="VAR_034289" description="In dbSNP:rs11670007.">
    <original>R</original>
    <variation>H</variation>
    <location>
        <position position="54"/>
    </location>
</feature>
<feature type="sequence variant" id="VAR_020381" description="In dbSNP:rs2240228." evidence="3">
    <original>V</original>
    <variation>M</variation>
    <location>
        <position position="224"/>
    </location>
</feature>
<feature type="sequence variant" id="VAR_020382" description="In dbSNP:rs2240229.">
    <original>S</original>
    <variation>N</variation>
    <location>
        <position position="293"/>
    </location>
</feature>